<feature type="chain" id="PRO_0000245879" description="FMN-dependent NADH:quinone oxidoreductase 3">
    <location>
        <begin position="1"/>
        <end position="211"/>
    </location>
</feature>
<feature type="binding site" evidence="1">
    <location>
        <begin position="102"/>
        <end position="105"/>
    </location>
    <ligand>
        <name>FMN</name>
        <dbReference type="ChEBI" id="CHEBI:58210"/>
    </ligand>
</feature>
<proteinExistence type="evidence at protein level"/>
<name>AZOR3_BACC1</name>
<organism>
    <name type="scientific">Bacillus cereus (strain ATCC 10987 / NRS 248)</name>
    <dbReference type="NCBI Taxonomy" id="222523"/>
    <lineage>
        <taxon>Bacteria</taxon>
        <taxon>Bacillati</taxon>
        <taxon>Bacillota</taxon>
        <taxon>Bacilli</taxon>
        <taxon>Bacillales</taxon>
        <taxon>Bacillaceae</taxon>
        <taxon>Bacillus</taxon>
        <taxon>Bacillus cereus group</taxon>
    </lineage>
</organism>
<comment type="function">
    <text evidence="1">Quinone reductase that provides resistance to thiol-specific stress caused by electrophilic quinones.</text>
</comment>
<comment type="function">
    <text evidence="1">Also exhibits azoreductase activity. Catalyzes the reductive cleavage of the azo bond in aromatic azo compounds to the corresponding amines.</text>
</comment>
<comment type="catalytic activity">
    <reaction evidence="1">
        <text>2 a quinone + NADH + H(+) = 2 a 1,4-benzosemiquinone + NAD(+)</text>
        <dbReference type="Rhea" id="RHEA:65952"/>
        <dbReference type="ChEBI" id="CHEBI:15378"/>
        <dbReference type="ChEBI" id="CHEBI:57540"/>
        <dbReference type="ChEBI" id="CHEBI:57945"/>
        <dbReference type="ChEBI" id="CHEBI:132124"/>
        <dbReference type="ChEBI" id="CHEBI:134225"/>
    </reaction>
</comment>
<comment type="catalytic activity">
    <reaction evidence="1">
        <text>N,N-dimethyl-1,4-phenylenediamine + anthranilate + 2 NAD(+) = 2-(4-dimethylaminophenyl)diazenylbenzoate + 2 NADH + 2 H(+)</text>
        <dbReference type="Rhea" id="RHEA:55872"/>
        <dbReference type="ChEBI" id="CHEBI:15378"/>
        <dbReference type="ChEBI" id="CHEBI:15783"/>
        <dbReference type="ChEBI" id="CHEBI:16567"/>
        <dbReference type="ChEBI" id="CHEBI:57540"/>
        <dbReference type="ChEBI" id="CHEBI:57945"/>
        <dbReference type="ChEBI" id="CHEBI:71579"/>
        <dbReference type="EC" id="1.7.1.17"/>
    </reaction>
</comment>
<comment type="cofactor">
    <cofactor evidence="1">
        <name>FMN</name>
        <dbReference type="ChEBI" id="CHEBI:58210"/>
    </cofactor>
    <text evidence="1">Binds 1 FMN per subunit.</text>
</comment>
<comment type="subunit">
    <text evidence="1">Homodimer.</text>
</comment>
<comment type="similarity">
    <text evidence="1">Belongs to the azoreductase type 1 family.</text>
</comment>
<sequence>MTKVLFITANPNSAEGSFGMAVGEAFIEAYKNEHPQDEVVTIDLFNTTVPAIDADVFAAWGKFAAGEGFEALTEAQQQKVAAMNTNLETFMHADRYVFVTPMWNFSYPPVVKAYLDNLAIAGKTFKYTENGPVGLLEGKKALHIQATGGVYSEGAYAAVDFGRNHLKTVLGFIGVNETEYIAVEGMNANPEKAQEIKEAAIANARELAKRF</sequence>
<reference key="1">
    <citation type="journal article" date="2004" name="Nucleic Acids Res.">
        <title>The genome sequence of Bacillus cereus ATCC 10987 reveals metabolic adaptations and a large plasmid related to Bacillus anthracis pXO1.</title>
        <authorList>
            <person name="Rasko D.A."/>
            <person name="Ravel J."/>
            <person name="Oekstad O.A."/>
            <person name="Helgason E."/>
            <person name="Cer R.Z."/>
            <person name="Jiang L."/>
            <person name="Shores K.A."/>
            <person name="Fouts D.E."/>
            <person name="Tourasse N.J."/>
            <person name="Angiuoli S.V."/>
            <person name="Kolonay J.F."/>
            <person name="Nelson W.C."/>
            <person name="Kolstoe A.-B."/>
            <person name="Fraser C.M."/>
            <person name="Read T.D."/>
        </authorList>
    </citation>
    <scope>NUCLEOTIDE SEQUENCE [LARGE SCALE GENOMIC DNA]</scope>
    <source>
        <strain>ATCC 10987 / NRS 248</strain>
    </source>
</reference>
<dbReference type="EC" id="1.6.5.-" evidence="1"/>
<dbReference type="EC" id="1.7.1.17" evidence="1"/>
<dbReference type="EMBL" id="AE017194">
    <property type="protein sequence ID" value="AAS41188.1"/>
    <property type="molecule type" value="Genomic_DNA"/>
</dbReference>
<dbReference type="PDB" id="9C0W">
    <property type="method" value="X-ray"/>
    <property type="resolution" value="2.35 A"/>
    <property type="chains" value="A/B=1-211"/>
</dbReference>
<dbReference type="PDBsum" id="9C0W"/>
<dbReference type="SMR" id="Q738X4"/>
<dbReference type="KEGG" id="bca:BCE_2269"/>
<dbReference type="HOGENOM" id="CLU_088964_3_1_9"/>
<dbReference type="Proteomes" id="UP000002527">
    <property type="component" value="Chromosome"/>
</dbReference>
<dbReference type="GO" id="GO:0009055">
    <property type="term" value="F:electron transfer activity"/>
    <property type="evidence" value="ECO:0007669"/>
    <property type="project" value="UniProtKB-UniRule"/>
</dbReference>
<dbReference type="GO" id="GO:0010181">
    <property type="term" value="F:FMN binding"/>
    <property type="evidence" value="ECO:0007669"/>
    <property type="project" value="UniProtKB-UniRule"/>
</dbReference>
<dbReference type="GO" id="GO:0016652">
    <property type="term" value="F:oxidoreductase activity, acting on NAD(P)H as acceptor"/>
    <property type="evidence" value="ECO:0007669"/>
    <property type="project" value="UniProtKB-UniRule"/>
</dbReference>
<dbReference type="GO" id="GO:0016655">
    <property type="term" value="F:oxidoreductase activity, acting on NAD(P)H, quinone or similar compound as acceptor"/>
    <property type="evidence" value="ECO:0007669"/>
    <property type="project" value="InterPro"/>
</dbReference>
<dbReference type="Gene3D" id="3.40.50.360">
    <property type="match status" value="1"/>
</dbReference>
<dbReference type="HAMAP" id="MF_01216">
    <property type="entry name" value="Azoreductase_type1"/>
    <property type="match status" value="1"/>
</dbReference>
<dbReference type="InterPro" id="IPR003680">
    <property type="entry name" value="Flavodoxin_fold"/>
</dbReference>
<dbReference type="InterPro" id="IPR029039">
    <property type="entry name" value="Flavoprotein-like_sf"/>
</dbReference>
<dbReference type="InterPro" id="IPR050104">
    <property type="entry name" value="FMN-dep_NADH:Q_OxRdtase_AzoR1"/>
</dbReference>
<dbReference type="InterPro" id="IPR023048">
    <property type="entry name" value="NADH:quinone_OxRdtase_FMN_depd"/>
</dbReference>
<dbReference type="NCBIfam" id="NF010075">
    <property type="entry name" value="PRK13556.1"/>
    <property type="match status" value="1"/>
</dbReference>
<dbReference type="PANTHER" id="PTHR43741">
    <property type="entry name" value="FMN-DEPENDENT NADH-AZOREDUCTASE 1"/>
    <property type="match status" value="1"/>
</dbReference>
<dbReference type="PANTHER" id="PTHR43741:SF7">
    <property type="entry name" value="FMN-DEPENDENT NADH:QUINONE OXIDOREDUCTASE"/>
    <property type="match status" value="1"/>
</dbReference>
<dbReference type="Pfam" id="PF02525">
    <property type="entry name" value="Flavodoxin_2"/>
    <property type="match status" value="1"/>
</dbReference>
<dbReference type="SUPFAM" id="SSF52218">
    <property type="entry name" value="Flavoproteins"/>
    <property type="match status" value="1"/>
</dbReference>
<gene>
    <name evidence="1" type="primary">azoR3</name>
    <name type="ordered locus">BCE_2269</name>
</gene>
<protein>
    <recommendedName>
        <fullName evidence="1">FMN-dependent NADH:quinone oxidoreductase 3</fullName>
        <ecNumber evidence="1">1.6.5.-</ecNumber>
    </recommendedName>
    <alternativeName>
        <fullName evidence="1">Azo-dye reductase 3</fullName>
    </alternativeName>
    <alternativeName>
        <fullName evidence="1">FMN-dependent NADH-azo compound oxidoreductase 3</fullName>
    </alternativeName>
    <alternativeName>
        <fullName evidence="1">FMN-dependent NADH-azoreductase 3</fullName>
        <ecNumber evidence="1">1.7.1.17</ecNumber>
    </alternativeName>
</protein>
<evidence type="ECO:0000255" key="1">
    <source>
        <dbReference type="HAMAP-Rule" id="MF_01216"/>
    </source>
</evidence>
<keyword id="KW-0002">3D-structure</keyword>
<keyword id="KW-0285">Flavoprotein</keyword>
<keyword id="KW-0288">FMN</keyword>
<keyword id="KW-0520">NAD</keyword>
<keyword id="KW-0560">Oxidoreductase</keyword>
<accession>Q738X4</accession>